<keyword id="KW-0064">Aspartyl protease</keyword>
<keyword id="KW-0997">Cell inner membrane</keyword>
<keyword id="KW-1003">Cell membrane</keyword>
<keyword id="KW-0378">Hydrolase</keyword>
<keyword id="KW-0472">Membrane</keyword>
<keyword id="KW-0645">Protease</keyword>
<keyword id="KW-0812">Transmembrane</keyword>
<keyword id="KW-1133">Transmembrane helix</keyword>
<feature type="chain" id="PRO_1000097241" description="Lipoprotein signal peptidase">
    <location>
        <begin position="1"/>
        <end position="156"/>
    </location>
</feature>
<feature type="transmembrane region" description="Helical" evidence="1">
    <location>
        <begin position="5"/>
        <end position="25"/>
    </location>
</feature>
<feature type="transmembrane region" description="Helical" evidence="1">
    <location>
        <begin position="64"/>
        <end position="84"/>
    </location>
</feature>
<feature type="transmembrane region" description="Helical" evidence="1">
    <location>
        <begin position="89"/>
        <end position="109"/>
    </location>
</feature>
<feature type="transmembrane region" description="Helical" evidence="1">
    <location>
        <begin position="122"/>
        <end position="142"/>
    </location>
</feature>
<feature type="active site" evidence="1">
    <location>
        <position position="113"/>
    </location>
</feature>
<feature type="active site" evidence="1">
    <location>
        <position position="130"/>
    </location>
</feature>
<organism>
    <name type="scientific">Campylobacter jejuni subsp. jejuni serotype O:6 (strain 81116 / NCTC 11828)</name>
    <dbReference type="NCBI Taxonomy" id="407148"/>
    <lineage>
        <taxon>Bacteria</taxon>
        <taxon>Pseudomonadati</taxon>
        <taxon>Campylobacterota</taxon>
        <taxon>Epsilonproteobacteria</taxon>
        <taxon>Campylobacterales</taxon>
        <taxon>Campylobacteraceae</taxon>
        <taxon>Campylobacter</taxon>
    </lineage>
</organism>
<comment type="function">
    <text evidence="1">This protein specifically catalyzes the removal of signal peptides from prolipoproteins.</text>
</comment>
<comment type="catalytic activity">
    <reaction evidence="1">
        <text>Release of signal peptides from bacterial membrane prolipoproteins. Hydrolyzes -Xaa-Yaa-Zaa-|-(S,diacylglyceryl)Cys-, in which Xaa is hydrophobic (preferably Leu), and Yaa (Ala or Ser) and Zaa (Gly or Ala) have small, neutral side chains.</text>
        <dbReference type="EC" id="3.4.23.36"/>
    </reaction>
</comment>
<comment type="pathway">
    <text evidence="1">Protein modification; lipoprotein biosynthesis (signal peptide cleavage).</text>
</comment>
<comment type="subcellular location">
    <subcellularLocation>
        <location evidence="1">Cell inner membrane</location>
        <topology evidence="1">Multi-pass membrane protein</topology>
    </subcellularLocation>
</comment>
<comment type="similarity">
    <text evidence="1">Belongs to the peptidase A8 family.</text>
</comment>
<name>LSPA_CAMJ8</name>
<reference key="1">
    <citation type="journal article" date="2007" name="J. Bacteriol.">
        <title>The complete genome sequence of Campylobacter jejuni strain 81116 (NCTC11828).</title>
        <authorList>
            <person name="Pearson B.M."/>
            <person name="Gaskin D.J.H."/>
            <person name="Segers R.P.A.M."/>
            <person name="Wells J.M."/>
            <person name="Nuijten P.J.M."/>
            <person name="van Vliet A.H.M."/>
        </authorList>
    </citation>
    <scope>NUCLEOTIDE SEQUENCE [LARGE SCALE GENOMIC DNA]</scope>
    <source>
        <strain>81116 / NCTC 11828</strain>
    </source>
</reference>
<accession>A8FKE9</accession>
<proteinExistence type="inferred from homology"/>
<sequence>MAKTFKFIFYFWGAFVLVFVLDQWVKSLTLAGLRWQSEYLDLTYALNTGVAFSMLSFLEHNLKYLHLALIVVLFIYLFWQKTLLKTHSIAFGMMLGAGVSNLLDRFIHGGVVDMFFWHKWFNFAIFNVADVMINISVALILIQEIFKKRKKDDRMD</sequence>
<dbReference type="EC" id="3.4.23.36" evidence="1"/>
<dbReference type="EMBL" id="CP000814">
    <property type="protein sequence ID" value="ABV51936.1"/>
    <property type="molecule type" value="Genomic_DNA"/>
</dbReference>
<dbReference type="RefSeq" id="WP_002877495.1">
    <property type="nucleotide sequence ID" value="NC_009839.1"/>
</dbReference>
<dbReference type="SMR" id="A8FKE9"/>
<dbReference type="KEGG" id="cju:C8J_0337"/>
<dbReference type="HOGENOM" id="CLU_083252_4_3_7"/>
<dbReference type="UniPathway" id="UPA00665"/>
<dbReference type="GO" id="GO:0005886">
    <property type="term" value="C:plasma membrane"/>
    <property type="evidence" value="ECO:0007669"/>
    <property type="project" value="UniProtKB-SubCell"/>
</dbReference>
<dbReference type="GO" id="GO:0004190">
    <property type="term" value="F:aspartic-type endopeptidase activity"/>
    <property type="evidence" value="ECO:0007669"/>
    <property type="project" value="UniProtKB-UniRule"/>
</dbReference>
<dbReference type="GO" id="GO:0006508">
    <property type="term" value="P:proteolysis"/>
    <property type="evidence" value="ECO:0007669"/>
    <property type="project" value="UniProtKB-KW"/>
</dbReference>
<dbReference type="HAMAP" id="MF_00161">
    <property type="entry name" value="LspA"/>
    <property type="match status" value="1"/>
</dbReference>
<dbReference type="InterPro" id="IPR001872">
    <property type="entry name" value="Peptidase_A8"/>
</dbReference>
<dbReference type="NCBIfam" id="TIGR00077">
    <property type="entry name" value="lspA"/>
    <property type="match status" value="1"/>
</dbReference>
<dbReference type="PANTHER" id="PTHR33695">
    <property type="entry name" value="LIPOPROTEIN SIGNAL PEPTIDASE"/>
    <property type="match status" value="1"/>
</dbReference>
<dbReference type="PANTHER" id="PTHR33695:SF1">
    <property type="entry name" value="LIPOPROTEIN SIGNAL PEPTIDASE"/>
    <property type="match status" value="1"/>
</dbReference>
<dbReference type="Pfam" id="PF01252">
    <property type="entry name" value="Peptidase_A8"/>
    <property type="match status" value="1"/>
</dbReference>
<dbReference type="PRINTS" id="PR00781">
    <property type="entry name" value="LIPOSIGPTASE"/>
</dbReference>
<dbReference type="PROSITE" id="PS00855">
    <property type="entry name" value="SPASE_II"/>
    <property type="match status" value="1"/>
</dbReference>
<protein>
    <recommendedName>
        <fullName evidence="1">Lipoprotein signal peptidase</fullName>
        <ecNumber evidence="1">3.4.23.36</ecNumber>
    </recommendedName>
    <alternativeName>
        <fullName evidence="1">Prolipoprotein signal peptidase</fullName>
    </alternativeName>
    <alternativeName>
        <fullName evidence="1">Signal peptidase II</fullName>
        <shortName evidence="1">SPase II</shortName>
    </alternativeName>
</protein>
<gene>
    <name evidence="1" type="primary">lspA</name>
    <name type="ordered locus">C8J_0337</name>
</gene>
<evidence type="ECO:0000255" key="1">
    <source>
        <dbReference type="HAMAP-Rule" id="MF_00161"/>
    </source>
</evidence>